<feature type="chain" id="PRO_1000078604" description="Porphobilinogen deaminase">
    <location>
        <begin position="1"/>
        <end position="301"/>
    </location>
</feature>
<feature type="modified residue" description="S-(dipyrrolylmethanemethyl)cysteine" evidence="1">
    <location>
        <position position="240"/>
    </location>
</feature>
<name>HEM3_CLOD6</name>
<keyword id="KW-0627">Porphyrin biosynthesis</keyword>
<keyword id="KW-1185">Reference proteome</keyword>
<keyword id="KW-0808">Transferase</keyword>
<comment type="function">
    <text evidence="1">Tetrapolymerization of the monopyrrole PBG into the hydroxymethylbilane pre-uroporphyrinogen in several discrete steps.</text>
</comment>
<comment type="catalytic activity">
    <reaction evidence="1">
        <text>4 porphobilinogen + H2O = hydroxymethylbilane + 4 NH4(+)</text>
        <dbReference type="Rhea" id="RHEA:13185"/>
        <dbReference type="ChEBI" id="CHEBI:15377"/>
        <dbReference type="ChEBI" id="CHEBI:28938"/>
        <dbReference type="ChEBI" id="CHEBI:57845"/>
        <dbReference type="ChEBI" id="CHEBI:58126"/>
        <dbReference type="EC" id="2.5.1.61"/>
    </reaction>
</comment>
<comment type="cofactor">
    <cofactor evidence="1">
        <name>dipyrromethane</name>
        <dbReference type="ChEBI" id="CHEBI:60342"/>
    </cofactor>
    <text evidence="1">Binds 1 dipyrromethane group covalently.</text>
</comment>
<comment type="pathway">
    <text evidence="1">Porphyrin-containing compound metabolism; protoporphyrin-IX biosynthesis; coproporphyrinogen-III from 5-aminolevulinate: step 2/4.</text>
</comment>
<comment type="subunit">
    <text evidence="1">Monomer.</text>
</comment>
<comment type="miscellaneous">
    <text evidence="1">The porphobilinogen subunits are added to the dipyrromethane group.</text>
</comment>
<comment type="similarity">
    <text evidence="1">Belongs to the HMBS family.</text>
</comment>
<evidence type="ECO:0000255" key="1">
    <source>
        <dbReference type="HAMAP-Rule" id="MF_00260"/>
    </source>
</evidence>
<dbReference type="EC" id="2.5.1.61" evidence="1"/>
<dbReference type="EMBL" id="AM180355">
    <property type="protein sequence ID" value="CAJ70324.1"/>
    <property type="molecule type" value="Genomic_DNA"/>
</dbReference>
<dbReference type="RefSeq" id="WP_011861963.1">
    <property type="nucleotide sequence ID" value="NZ_JAUPES010000009.1"/>
</dbReference>
<dbReference type="RefSeq" id="YP_001089941.1">
    <property type="nucleotide sequence ID" value="NC_009089.1"/>
</dbReference>
<dbReference type="SMR" id="Q180R9"/>
<dbReference type="STRING" id="272563.CD630_34210"/>
<dbReference type="EnsemblBacteria" id="CAJ70324">
    <property type="protein sequence ID" value="CAJ70324"/>
    <property type="gene ID" value="CD630_34210"/>
</dbReference>
<dbReference type="KEGG" id="cdf:CD630_34210"/>
<dbReference type="KEGG" id="pdc:CDIF630_03729"/>
<dbReference type="PATRIC" id="fig|272563.120.peg.3615"/>
<dbReference type="eggNOG" id="COG0181">
    <property type="taxonomic scope" value="Bacteria"/>
</dbReference>
<dbReference type="OrthoDB" id="9810298at2"/>
<dbReference type="PhylomeDB" id="Q180R9"/>
<dbReference type="BioCyc" id="PDIF272563:G12WB-3598-MONOMER"/>
<dbReference type="UniPathway" id="UPA00251">
    <property type="reaction ID" value="UER00319"/>
</dbReference>
<dbReference type="Proteomes" id="UP000001978">
    <property type="component" value="Chromosome"/>
</dbReference>
<dbReference type="GO" id="GO:0005737">
    <property type="term" value="C:cytoplasm"/>
    <property type="evidence" value="ECO:0007669"/>
    <property type="project" value="TreeGrafter"/>
</dbReference>
<dbReference type="GO" id="GO:0004418">
    <property type="term" value="F:hydroxymethylbilane synthase activity"/>
    <property type="evidence" value="ECO:0007669"/>
    <property type="project" value="UniProtKB-UniRule"/>
</dbReference>
<dbReference type="GO" id="GO:0006782">
    <property type="term" value="P:protoporphyrinogen IX biosynthetic process"/>
    <property type="evidence" value="ECO:0007669"/>
    <property type="project" value="UniProtKB-UniRule"/>
</dbReference>
<dbReference type="FunFam" id="3.40.190.10:FF:000004">
    <property type="entry name" value="Porphobilinogen deaminase"/>
    <property type="match status" value="1"/>
</dbReference>
<dbReference type="FunFam" id="3.40.190.10:FF:000005">
    <property type="entry name" value="Porphobilinogen deaminase"/>
    <property type="match status" value="1"/>
</dbReference>
<dbReference type="Gene3D" id="3.40.190.10">
    <property type="entry name" value="Periplasmic binding protein-like II"/>
    <property type="match status" value="2"/>
</dbReference>
<dbReference type="Gene3D" id="3.30.160.40">
    <property type="entry name" value="Porphobilinogen deaminase, C-terminal domain"/>
    <property type="match status" value="1"/>
</dbReference>
<dbReference type="HAMAP" id="MF_00260">
    <property type="entry name" value="Porphobil_deam"/>
    <property type="match status" value="1"/>
</dbReference>
<dbReference type="InterPro" id="IPR000860">
    <property type="entry name" value="HemC"/>
</dbReference>
<dbReference type="InterPro" id="IPR022419">
    <property type="entry name" value="Porphobilin_deaminase_cofac_BS"/>
</dbReference>
<dbReference type="InterPro" id="IPR022417">
    <property type="entry name" value="Porphobilin_deaminase_N"/>
</dbReference>
<dbReference type="InterPro" id="IPR022418">
    <property type="entry name" value="Porphobilinogen_deaminase_C"/>
</dbReference>
<dbReference type="InterPro" id="IPR036803">
    <property type="entry name" value="Porphobilinogen_deaminase_C_sf"/>
</dbReference>
<dbReference type="NCBIfam" id="TIGR00212">
    <property type="entry name" value="hemC"/>
    <property type="match status" value="1"/>
</dbReference>
<dbReference type="PANTHER" id="PTHR11557">
    <property type="entry name" value="PORPHOBILINOGEN DEAMINASE"/>
    <property type="match status" value="1"/>
</dbReference>
<dbReference type="PANTHER" id="PTHR11557:SF0">
    <property type="entry name" value="PORPHOBILINOGEN DEAMINASE"/>
    <property type="match status" value="1"/>
</dbReference>
<dbReference type="Pfam" id="PF01379">
    <property type="entry name" value="Porphobil_deam"/>
    <property type="match status" value="1"/>
</dbReference>
<dbReference type="Pfam" id="PF03900">
    <property type="entry name" value="Porphobil_deamC"/>
    <property type="match status" value="1"/>
</dbReference>
<dbReference type="PIRSF" id="PIRSF001438">
    <property type="entry name" value="4pyrrol_synth_OHMeBilane_synth"/>
    <property type="match status" value="1"/>
</dbReference>
<dbReference type="PRINTS" id="PR00151">
    <property type="entry name" value="PORPHBDMNASE"/>
</dbReference>
<dbReference type="SUPFAM" id="SSF53850">
    <property type="entry name" value="Periplasmic binding protein-like II"/>
    <property type="match status" value="1"/>
</dbReference>
<dbReference type="SUPFAM" id="SSF54782">
    <property type="entry name" value="Porphobilinogen deaminase (hydroxymethylbilane synthase), C-terminal domain"/>
    <property type="match status" value="1"/>
</dbReference>
<dbReference type="PROSITE" id="PS00533">
    <property type="entry name" value="PORPHOBILINOGEN_DEAM"/>
    <property type="match status" value="1"/>
</dbReference>
<reference key="1">
    <citation type="journal article" date="2006" name="Nat. Genet.">
        <title>The multidrug-resistant human pathogen Clostridium difficile has a highly mobile, mosaic genome.</title>
        <authorList>
            <person name="Sebaihia M."/>
            <person name="Wren B.W."/>
            <person name="Mullany P."/>
            <person name="Fairweather N.F."/>
            <person name="Minton N."/>
            <person name="Stabler R."/>
            <person name="Thomson N.R."/>
            <person name="Roberts A.P."/>
            <person name="Cerdeno-Tarraga A.M."/>
            <person name="Wang H."/>
            <person name="Holden M.T.G."/>
            <person name="Wright A."/>
            <person name="Churcher C."/>
            <person name="Quail M.A."/>
            <person name="Baker S."/>
            <person name="Bason N."/>
            <person name="Brooks K."/>
            <person name="Chillingworth T."/>
            <person name="Cronin A."/>
            <person name="Davis P."/>
            <person name="Dowd L."/>
            <person name="Fraser A."/>
            <person name="Feltwell T."/>
            <person name="Hance Z."/>
            <person name="Holroyd S."/>
            <person name="Jagels K."/>
            <person name="Moule S."/>
            <person name="Mungall K."/>
            <person name="Price C."/>
            <person name="Rabbinowitsch E."/>
            <person name="Sharp S."/>
            <person name="Simmonds M."/>
            <person name="Stevens K."/>
            <person name="Unwin L."/>
            <person name="Whithead S."/>
            <person name="Dupuy B."/>
            <person name="Dougan G."/>
            <person name="Barrell B."/>
            <person name="Parkhill J."/>
        </authorList>
    </citation>
    <scope>NUCLEOTIDE SEQUENCE [LARGE SCALE GENOMIC DNA]</scope>
    <source>
        <strain>630</strain>
    </source>
</reference>
<protein>
    <recommendedName>
        <fullName evidence="1">Porphobilinogen deaminase</fullName>
        <shortName evidence="1">PBG</shortName>
        <ecNumber evidence="1">2.5.1.61</ecNumber>
    </recommendedName>
    <alternativeName>
        <fullName evidence="1">Hydroxymethylbilane synthase</fullName>
        <shortName evidence="1">HMBS</shortName>
    </alternativeName>
    <alternativeName>
        <fullName evidence="1">Pre-uroporphyrinogen synthase</fullName>
    </alternativeName>
</protein>
<organism>
    <name type="scientific">Clostridioides difficile (strain 630)</name>
    <name type="common">Peptoclostridium difficile</name>
    <dbReference type="NCBI Taxonomy" id="272563"/>
    <lineage>
        <taxon>Bacteria</taxon>
        <taxon>Bacillati</taxon>
        <taxon>Bacillota</taxon>
        <taxon>Clostridia</taxon>
        <taxon>Peptostreptococcales</taxon>
        <taxon>Peptostreptococcaceae</taxon>
        <taxon>Clostridioides</taxon>
    </lineage>
</organism>
<proteinExistence type="inferred from homology"/>
<gene>
    <name evidence="1" type="primary">hemC</name>
    <name type="ordered locus">CD630_34210</name>
</gene>
<sequence length="301" mass="33399">MNIVVGTRGSNLALIQTEWVINELKKKYPEISFEIKIIKTKGDLIQNVSLDKIGDKGLFVKEIEQQLLDGKIDIAVHSMKDMPSYLANGLKFAHTPKREDPRDVLILREGYKNLDDLPHGAVIGTGSKRRKFQLLKQRPDLNIVQVRGNVETRIRKIKDENMHGIVLAASGIIRANLQDKISSYLPVDVVIPAPAQGALAIEIRSNDSAIEGIVNSLKDENTEIQILAERGFLDGVNGSCHIPMAAYCEIIQDKIHLTGLYGDSEGKKVVIKSIDGDISSPRELGLKLAKLVLKEYENYEG</sequence>
<accession>Q180R9</accession>